<dbReference type="EC" id="2.7.1.40"/>
<dbReference type="EMBL" id="U87316">
    <property type="protein sequence ID" value="AAB66498.1"/>
    <property type="status" value="ALT_INIT"/>
    <property type="molecule type" value="Genomic_DNA"/>
</dbReference>
<dbReference type="EMBL" id="CP001510">
    <property type="protein sequence ID" value="ACS40693.1"/>
    <property type="molecule type" value="Genomic_DNA"/>
</dbReference>
<dbReference type="RefSeq" id="WP_003601864.1">
    <property type="nucleotide sequence ID" value="NC_012808.1"/>
</dbReference>
<dbReference type="SMR" id="O05118"/>
<dbReference type="STRING" id="272630.MexAM1_META1p2941"/>
<dbReference type="GeneID" id="72990392"/>
<dbReference type="KEGG" id="mea:Mex_1p2941"/>
<dbReference type="eggNOG" id="COG0469">
    <property type="taxonomic scope" value="Bacteria"/>
</dbReference>
<dbReference type="HOGENOM" id="CLU_015439_0_2_5"/>
<dbReference type="OrthoDB" id="9812123at2"/>
<dbReference type="UniPathway" id="UPA00109">
    <property type="reaction ID" value="UER00188"/>
</dbReference>
<dbReference type="Proteomes" id="UP000009081">
    <property type="component" value="Chromosome"/>
</dbReference>
<dbReference type="GO" id="GO:0005524">
    <property type="term" value="F:ATP binding"/>
    <property type="evidence" value="ECO:0007669"/>
    <property type="project" value="UniProtKB-KW"/>
</dbReference>
<dbReference type="GO" id="GO:0016301">
    <property type="term" value="F:kinase activity"/>
    <property type="evidence" value="ECO:0007669"/>
    <property type="project" value="UniProtKB-KW"/>
</dbReference>
<dbReference type="GO" id="GO:0000287">
    <property type="term" value="F:magnesium ion binding"/>
    <property type="evidence" value="ECO:0007669"/>
    <property type="project" value="InterPro"/>
</dbReference>
<dbReference type="GO" id="GO:0030955">
    <property type="term" value="F:potassium ion binding"/>
    <property type="evidence" value="ECO:0007669"/>
    <property type="project" value="InterPro"/>
</dbReference>
<dbReference type="GO" id="GO:0004743">
    <property type="term" value="F:pyruvate kinase activity"/>
    <property type="evidence" value="ECO:0007669"/>
    <property type="project" value="UniProtKB-EC"/>
</dbReference>
<dbReference type="FunFam" id="2.40.33.10:FF:000001">
    <property type="entry name" value="Pyruvate kinase"/>
    <property type="match status" value="1"/>
</dbReference>
<dbReference type="FunFam" id="3.20.20.60:FF:000025">
    <property type="entry name" value="Pyruvate kinase"/>
    <property type="match status" value="1"/>
</dbReference>
<dbReference type="Gene3D" id="3.20.20.60">
    <property type="entry name" value="Phosphoenolpyruvate-binding domains"/>
    <property type="match status" value="1"/>
</dbReference>
<dbReference type="Gene3D" id="2.40.33.10">
    <property type="entry name" value="PK beta-barrel domain-like"/>
    <property type="match status" value="1"/>
</dbReference>
<dbReference type="Gene3D" id="3.40.1380.20">
    <property type="entry name" value="Pyruvate kinase, C-terminal domain"/>
    <property type="match status" value="1"/>
</dbReference>
<dbReference type="InterPro" id="IPR001697">
    <property type="entry name" value="Pyr_Knase"/>
</dbReference>
<dbReference type="InterPro" id="IPR015813">
    <property type="entry name" value="Pyrv/PenolPyrv_kinase-like_dom"/>
</dbReference>
<dbReference type="InterPro" id="IPR040442">
    <property type="entry name" value="Pyrv_kinase-like_dom_sf"/>
</dbReference>
<dbReference type="InterPro" id="IPR011037">
    <property type="entry name" value="Pyrv_Knase-like_insert_dom_sf"/>
</dbReference>
<dbReference type="InterPro" id="IPR018209">
    <property type="entry name" value="Pyrv_Knase_AS"/>
</dbReference>
<dbReference type="InterPro" id="IPR015793">
    <property type="entry name" value="Pyrv_Knase_brl"/>
</dbReference>
<dbReference type="InterPro" id="IPR015795">
    <property type="entry name" value="Pyrv_Knase_C"/>
</dbReference>
<dbReference type="InterPro" id="IPR036918">
    <property type="entry name" value="Pyrv_Knase_C_sf"/>
</dbReference>
<dbReference type="InterPro" id="IPR015806">
    <property type="entry name" value="Pyrv_Knase_insert_dom_sf"/>
</dbReference>
<dbReference type="NCBIfam" id="NF004491">
    <property type="entry name" value="PRK05826.1"/>
    <property type="match status" value="1"/>
</dbReference>
<dbReference type="NCBIfam" id="NF004886">
    <property type="entry name" value="PRK06247.1"/>
    <property type="match status" value="1"/>
</dbReference>
<dbReference type="NCBIfam" id="NF004978">
    <property type="entry name" value="PRK06354.1"/>
    <property type="match status" value="1"/>
</dbReference>
<dbReference type="NCBIfam" id="TIGR01064">
    <property type="entry name" value="pyruv_kin"/>
    <property type="match status" value="1"/>
</dbReference>
<dbReference type="PANTHER" id="PTHR11817">
    <property type="entry name" value="PYRUVATE KINASE"/>
    <property type="match status" value="1"/>
</dbReference>
<dbReference type="Pfam" id="PF00224">
    <property type="entry name" value="PK"/>
    <property type="match status" value="1"/>
</dbReference>
<dbReference type="Pfam" id="PF02887">
    <property type="entry name" value="PK_C"/>
    <property type="match status" value="1"/>
</dbReference>
<dbReference type="PRINTS" id="PR01050">
    <property type="entry name" value="PYRUVTKNASE"/>
</dbReference>
<dbReference type="SUPFAM" id="SSF51621">
    <property type="entry name" value="Phosphoenolpyruvate/pyruvate domain"/>
    <property type="match status" value="1"/>
</dbReference>
<dbReference type="SUPFAM" id="SSF50800">
    <property type="entry name" value="PK beta-barrel domain-like"/>
    <property type="match status" value="1"/>
</dbReference>
<dbReference type="SUPFAM" id="SSF52935">
    <property type="entry name" value="PK C-terminal domain-like"/>
    <property type="match status" value="1"/>
</dbReference>
<dbReference type="PROSITE" id="PS00110">
    <property type="entry name" value="PYRUVATE_KINASE"/>
    <property type="match status" value="1"/>
</dbReference>
<organism>
    <name type="scientific">Methylorubrum extorquens (strain ATCC 14718 / DSM 1338 / JCM 2805 / NCIMB 9133 / AM1)</name>
    <name type="common">Methylobacterium extorquens</name>
    <dbReference type="NCBI Taxonomy" id="272630"/>
    <lineage>
        <taxon>Bacteria</taxon>
        <taxon>Pseudomonadati</taxon>
        <taxon>Pseudomonadota</taxon>
        <taxon>Alphaproteobacteria</taxon>
        <taxon>Hyphomicrobiales</taxon>
        <taxon>Methylobacteriaceae</taxon>
        <taxon>Methylorubrum</taxon>
    </lineage>
</organism>
<reference key="1">
    <citation type="submission" date="1997-01" db="EMBL/GenBank/DDBJ databases">
        <authorList>
            <person name="Chistoserdova L."/>
            <person name="Lidstrom M.E."/>
        </authorList>
    </citation>
    <scope>NUCLEOTIDE SEQUENCE [GENOMIC DNA]</scope>
</reference>
<reference key="2">
    <citation type="journal article" date="2009" name="PLoS ONE">
        <title>Methylobacterium genome sequences: a reference blueprint to investigate microbial metabolism of C1 compounds from natural and industrial sources.</title>
        <authorList>
            <person name="Vuilleumier S."/>
            <person name="Chistoserdova L."/>
            <person name="Lee M.-C."/>
            <person name="Bringel F."/>
            <person name="Lajus A."/>
            <person name="Zhou Y."/>
            <person name="Gourion B."/>
            <person name="Barbe V."/>
            <person name="Chang J."/>
            <person name="Cruveiller S."/>
            <person name="Dossat C."/>
            <person name="Gillett W."/>
            <person name="Gruffaz C."/>
            <person name="Haugen E."/>
            <person name="Hourcade E."/>
            <person name="Levy R."/>
            <person name="Mangenot S."/>
            <person name="Muller E."/>
            <person name="Nadalig T."/>
            <person name="Pagni M."/>
            <person name="Penny C."/>
            <person name="Peyraud R."/>
            <person name="Robinson D.G."/>
            <person name="Roche D."/>
            <person name="Rouy Z."/>
            <person name="Saenampechek C."/>
            <person name="Salvignol G."/>
            <person name="Vallenet D."/>
            <person name="Wu Z."/>
            <person name="Marx C.J."/>
            <person name="Vorholt J.A."/>
            <person name="Olson M.V."/>
            <person name="Kaul R."/>
            <person name="Weissenbach J."/>
            <person name="Medigue C."/>
            <person name="Lidstrom M.E."/>
        </authorList>
    </citation>
    <scope>NUCLEOTIDE SEQUENCE [LARGE SCALE GENOMIC DNA]</scope>
    <source>
        <strain>ATCC 14718 / DSM 1338 / JCM 2805 / NCIMB 9133 / AM1</strain>
    </source>
</reference>
<feature type="chain" id="PRO_0000112078" description="Pyruvate kinase">
    <location>
        <begin position="1"/>
        <end position="478"/>
    </location>
</feature>
<feature type="binding site" evidence="1">
    <location>
        <position position="35"/>
    </location>
    <ligand>
        <name>substrate</name>
    </ligand>
</feature>
<feature type="binding site" evidence="2">
    <location>
        <begin position="37"/>
        <end position="40"/>
    </location>
    <ligand>
        <name>ATP</name>
        <dbReference type="ChEBI" id="CHEBI:30616"/>
    </ligand>
</feature>
<feature type="binding site" evidence="1">
    <location>
        <position position="37"/>
    </location>
    <ligand>
        <name>K(+)</name>
        <dbReference type="ChEBI" id="CHEBI:29103"/>
    </ligand>
</feature>
<feature type="binding site" evidence="1">
    <location>
        <position position="39"/>
    </location>
    <ligand>
        <name>K(+)</name>
        <dbReference type="ChEBI" id="CHEBI:29103"/>
    </ligand>
</feature>
<feature type="binding site" evidence="1">
    <location>
        <position position="69"/>
    </location>
    <ligand>
        <name>K(+)</name>
        <dbReference type="ChEBI" id="CHEBI:29103"/>
    </ligand>
</feature>
<feature type="binding site" evidence="2">
    <location>
        <position position="76"/>
    </location>
    <ligand>
        <name>ATP</name>
        <dbReference type="ChEBI" id="CHEBI:30616"/>
    </ligand>
</feature>
<feature type="binding site" evidence="2">
    <location>
        <position position="157"/>
    </location>
    <ligand>
        <name>ATP</name>
        <dbReference type="ChEBI" id="CHEBI:30616"/>
    </ligand>
</feature>
<feature type="binding site" evidence="1">
    <location>
        <position position="219"/>
    </location>
    <ligand>
        <name>Mg(2+)</name>
        <dbReference type="ChEBI" id="CHEBI:18420"/>
    </ligand>
</feature>
<feature type="binding site" evidence="1">
    <location>
        <position position="242"/>
    </location>
    <ligand>
        <name>substrate</name>
    </ligand>
</feature>
<feature type="binding site" evidence="1">
    <location>
        <position position="243"/>
    </location>
    <ligand>
        <name>Mg(2+)</name>
        <dbReference type="ChEBI" id="CHEBI:18420"/>
    </ligand>
</feature>
<feature type="binding site" evidence="1">
    <location>
        <position position="243"/>
    </location>
    <ligand>
        <name>substrate</name>
    </ligand>
</feature>
<feature type="binding site" evidence="1">
    <location>
        <position position="275"/>
    </location>
    <ligand>
        <name>substrate</name>
    </ligand>
</feature>
<feature type="site" description="Transition state stabilizer" evidence="1">
    <location>
        <position position="217"/>
    </location>
</feature>
<feature type="sequence conflict" description="In Ref. 1; AAB66498." evidence="3" ref="1">
    <original>A</original>
    <variation>G</variation>
    <location>
        <position position="60"/>
    </location>
</feature>
<feature type="sequence conflict" description="In Ref. 1; AAB66498." evidence="3" ref="1">
    <original>V</original>
    <variation>A</variation>
    <location>
        <position position="165"/>
    </location>
</feature>
<sequence>MKRSRRTKIVATLGPASDTPEMIEKLFHAGADVFRINMSHLAREKLPERIEVIRTIEREAKRPIGILVDLQGPKLRLGTFVGDAAVLENGQTFVLDSDPTPGDTDRVFLPHPEILSALEPSHGILIDDGKLRLIVTEVSEGRAVTRVEVGGRISNRKGVSLPHTVLPVPAMTEKDRGDLEAGLAAGADWIAVSFVQRPEDVAEVKKVAAGRALVMAKIEKPQALTRLDEIIEISDGIMVARGDLGVEMPLEQVPGVQKRITRVARRLGKPVVVATQMLESMITSPVPTRAEVSDVATAVYEGADAVMLSAESAAGDFPVEAIGTMNRIAEQVERDALYWSILMAQRSEPEPTASDAIAAAAHQIVEALSLRSIMAWTHSGSTVLRLARARPNASVIALTPKRETARRLTMAWGVHPIVTKDASDVDDMAFRAAKFAVRERFAEIGDRVIIVAGVPFGIPGATNMVRIAFVTREHAERA</sequence>
<accession>O05118</accession>
<accession>C5AUT3</accession>
<comment type="catalytic activity">
    <reaction>
        <text>pyruvate + ATP = phosphoenolpyruvate + ADP + H(+)</text>
        <dbReference type="Rhea" id="RHEA:18157"/>
        <dbReference type="ChEBI" id="CHEBI:15361"/>
        <dbReference type="ChEBI" id="CHEBI:15378"/>
        <dbReference type="ChEBI" id="CHEBI:30616"/>
        <dbReference type="ChEBI" id="CHEBI:58702"/>
        <dbReference type="ChEBI" id="CHEBI:456216"/>
        <dbReference type="EC" id="2.7.1.40"/>
    </reaction>
</comment>
<comment type="cofactor">
    <cofactor>
        <name>Mg(2+)</name>
        <dbReference type="ChEBI" id="CHEBI:18420"/>
    </cofactor>
</comment>
<comment type="cofactor">
    <cofactor>
        <name>K(+)</name>
        <dbReference type="ChEBI" id="CHEBI:29103"/>
    </cofactor>
</comment>
<comment type="pathway">
    <text>Carbohydrate degradation; glycolysis; pyruvate from D-glyceraldehyde 3-phosphate: step 5/5.</text>
</comment>
<comment type="subunit">
    <text evidence="1">Homotetramer.</text>
</comment>
<comment type="similarity">
    <text evidence="3">Belongs to the pyruvate kinase family.</text>
</comment>
<comment type="sequence caution" evidence="3">
    <conflict type="erroneous initiation">
        <sequence resource="EMBL-CDS" id="AAB66498"/>
    </conflict>
</comment>
<proteinExistence type="inferred from homology"/>
<keyword id="KW-0067">ATP-binding</keyword>
<keyword id="KW-0324">Glycolysis</keyword>
<keyword id="KW-0418">Kinase</keyword>
<keyword id="KW-0460">Magnesium</keyword>
<keyword id="KW-0479">Metal-binding</keyword>
<keyword id="KW-0547">Nucleotide-binding</keyword>
<keyword id="KW-0630">Potassium</keyword>
<keyword id="KW-0670">Pyruvate</keyword>
<keyword id="KW-1185">Reference proteome</keyword>
<keyword id="KW-0808">Transferase</keyword>
<name>KPYK_METEA</name>
<gene>
    <name type="primary">pyk</name>
    <name type="synonym">pykA</name>
    <name type="ordered locus">MexAM1_META1p2941</name>
</gene>
<protein>
    <recommendedName>
        <fullName>Pyruvate kinase</fullName>
        <shortName>PK</shortName>
        <ecNumber>2.7.1.40</ecNumber>
    </recommendedName>
</protein>
<evidence type="ECO:0000250" key="1"/>
<evidence type="ECO:0000250" key="2">
    <source>
        <dbReference type="UniProtKB" id="P14618"/>
    </source>
</evidence>
<evidence type="ECO:0000305" key="3"/>